<comment type="function">
    <text evidence="1">Catalyzes the reversible cyclization of carbamoyl aspartate to dihydroorotate.</text>
</comment>
<comment type="catalytic activity">
    <reaction evidence="1">
        <text>(S)-dihydroorotate + H2O = N-carbamoyl-L-aspartate + H(+)</text>
        <dbReference type="Rhea" id="RHEA:24296"/>
        <dbReference type="ChEBI" id="CHEBI:15377"/>
        <dbReference type="ChEBI" id="CHEBI:15378"/>
        <dbReference type="ChEBI" id="CHEBI:30864"/>
        <dbReference type="ChEBI" id="CHEBI:32814"/>
        <dbReference type="EC" id="3.5.2.3"/>
    </reaction>
</comment>
<comment type="cofactor">
    <cofactor evidence="1">
        <name>Zn(2+)</name>
        <dbReference type="ChEBI" id="CHEBI:29105"/>
    </cofactor>
    <text evidence="1">Binds 2 Zn(2+) ions per subunit.</text>
</comment>
<comment type="pathway">
    <text evidence="1">Pyrimidine metabolism; UMP biosynthesis via de novo pathway; (S)-dihydroorotate from bicarbonate: step 3/3.</text>
</comment>
<comment type="similarity">
    <text evidence="1">Belongs to the metallo-dependent hydrolases superfamily. DHOase family. Class I DHOase subfamily.</text>
</comment>
<feature type="chain" id="PRO_1000193088" description="Dihydroorotase">
    <location>
        <begin position="1"/>
        <end position="428"/>
    </location>
</feature>
<feature type="active site" evidence="1">
    <location>
        <position position="304"/>
    </location>
</feature>
<feature type="binding site" evidence="1">
    <location>
        <position position="59"/>
    </location>
    <ligand>
        <name>Zn(2+)</name>
        <dbReference type="ChEBI" id="CHEBI:29105"/>
        <label>1</label>
    </ligand>
</feature>
<feature type="binding site" evidence="1">
    <location>
        <begin position="61"/>
        <end position="63"/>
    </location>
    <ligand>
        <name>substrate</name>
    </ligand>
</feature>
<feature type="binding site" evidence="1">
    <location>
        <position position="61"/>
    </location>
    <ligand>
        <name>Zn(2+)</name>
        <dbReference type="ChEBI" id="CHEBI:29105"/>
        <label>1</label>
    </ligand>
</feature>
<feature type="binding site" evidence="1">
    <location>
        <position position="93"/>
    </location>
    <ligand>
        <name>substrate</name>
    </ligand>
</feature>
<feature type="binding site" evidence="1">
    <location>
        <position position="151"/>
    </location>
    <ligand>
        <name>Zn(2+)</name>
        <dbReference type="ChEBI" id="CHEBI:29105"/>
        <label>1</label>
    </ligand>
</feature>
<feature type="binding site" evidence="1">
    <location>
        <position position="151"/>
    </location>
    <ligand>
        <name>Zn(2+)</name>
        <dbReference type="ChEBI" id="CHEBI:29105"/>
        <label>2</label>
    </ligand>
</feature>
<feature type="binding site" evidence="1">
    <location>
        <position position="178"/>
    </location>
    <ligand>
        <name>Zn(2+)</name>
        <dbReference type="ChEBI" id="CHEBI:29105"/>
        <label>2</label>
    </ligand>
</feature>
<feature type="binding site" evidence="1">
    <location>
        <position position="231"/>
    </location>
    <ligand>
        <name>Zn(2+)</name>
        <dbReference type="ChEBI" id="CHEBI:29105"/>
        <label>2</label>
    </ligand>
</feature>
<feature type="binding site" evidence="1">
    <location>
        <position position="277"/>
    </location>
    <ligand>
        <name>substrate</name>
    </ligand>
</feature>
<feature type="binding site" evidence="1">
    <location>
        <position position="304"/>
    </location>
    <ligand>
        <name>Zn(2+)</name>
        <dbReference type="ChEBI" id="CHEBI:29105"/>
        <label>1</label>
    </ligand>
</feature>
<feature type="binding site" evidence="1">
    <location>
        <position position="308"/>
    </location>
    <ligand>
        <name>substrate</name>
    </ligand>
</feature>
<feature type="binding site" evidence="1">
    <location>
        <begin position="322"/>
        <end position="323"/>
    </location>
    <ligand>
        <name>substrate</name>
    </ligand>
</feature>
<sequence>MNYLFKNGRYMNEEGKIVATDLLVQDGKIAKVAENITADNAEVIDVNGKLIAPGLVDVHVHLREPGGEHKETIETGTLAAAKGGFTTICAMPNTRPVPDCREHMEDLQNRIKEKAHVNVLPYGAITVRQAGSEMTDFETLKELGAFAFTDDGVGVQDASMMLAAMKRAAKLNMAVVAHCEENTLINKGCVHEGKFSEKHGLNGIPSVCESVHIARDILLAEAADCHYHVCHVSTKGSVRVIRDAKRAGIKVTAEVTPHHLVLCEDDIPSADPNFKMNPPLRGKEDHEALIEGLLDGTIDMIATDHAPHTAEEKAQGIERAPFGITGFETAFPLLYTNLVKKGIITLEQLIQFLTEKPADTFGLEAGRLKEGRTADITIIDLEQEEEIDPTTFLSKGKNTPFAGWKCQGWPVMTIVGGKIAWQKESALV</sequence>
<name>PYRC_BACAA</name>
<keyword id="KW-0378">Hydrolase</keyword>
<keyword id="KW-0479">Metal-binding</keyword>
<keyword id="KW-0665">Pyrimidine biosynthesis</keyword>
<keyword id="KW-0862">Zinc</keyword>
<protein>
    <recommendedName>
        <fullName evidence="1">Dihydroorotase</fullName>
        <shortName evidence="1">DHOase</shortName>
        <ecNumber evidence="1">3.5.2.3</ecNumber>
    </recommendedName>
</protein>
<evidence type="ECO:0000255" key="1">
    <source>
        <dbReference type="HAMAP-Rule" id="MF_00220"/>
    </source>
</evidence>
<reference key="1">
    <citation type="submission" date="2009-04" db="EMBL/GenBank/DDBJ databases">
        <title>Genome sequence of Bacillus anthracis A0248.</title>
        <authorList>
            <person name="Dodson R.J."/>
            <person name="Munk A.C."/>
            <person name="Bruce D."/>
            <person name="Detter C."/>
            <person name="Tapia R."/>
            <person name="Sutton G."/>
            <person name="Sims D."/>
            <person name="Brettin T."/>
        </authorList>
    </citation>
    <scope>NUCLEOTIDE SEQUENCE [LARGE SCALE GENOMIC DNA]</scope>
    <source>
        <strain>A0248</strain>
    </source>
</reference>
<gene>
    <name evidence="1" type="primary">pyrC</name>
    <name type="ordered locus">BAA_4050</name>
</gene>
<organism>
    <name type="scientific">Bacillus anthracis (strain A0248)</name>
    <dbReference type="NCBI Taxonomy" id="592021"/>
    <lineage>
        <taxon>Bacteria</taxon>
        <taxon>Bacillati</taxon>
        <taxon>Bacillota</taxon>
        <taxon>Bacilli</taxon>
        <taxon>Bacillales</taxon>
        <taxon>Bacillaceae</taxon>
        <taxon>Bacillus</taxon>
        <taxon>Bacillus cereus group</taxon>
    </lineage>
</organism>
<proteinExistence type="inferred from homology"/>
<accession>C3P658</accession>
<dbReference type="EC" id="3.5.2.3" evidence="1"/>
<dbReference type="EMBL" id="CP001598">
    <property type="protein sequence ID" value="ACQ47572.1"/>
    <property type="molecule type" value="Genomic_DNA"/>
</dbReference>
<dbReference type="RefSeq" id="WP_001108379.1">
    <property type="nucleotide sequence ID" value="NC_012659.1"/>
</dbReference>
<dbReference type="SMR" id="C3P658"/>
<dbReference type="GeneID" id="45023717"/>
<dbReference type="KEGG" id="bai:BAA_4050"/>
<dbReference type="HOGENOM" id="CLU_015572_1_0_9"/>
<dbReference type="UniPathway" id="UPA00070">
    <property type="reaction ID" value="UER00117"/>
</dbReference>
<dbReference type="GO" id="GO:0005737">
    <property type="term" value="C:cytoplasm"/>
    <property type="evidence" value="ECO:0007669"/>
    <property type="project" value="TreeGrafter"/>
</dbReference>
<dbReference type="GO" id="GO:0004038">
    <property type="term" value="F:allantoinase activity"/>
    <property type="evidence" value="ECO:0007669"/>
    <property type="project" value="TreeGrafter"/>
</dbReference>
<dbReference type="GO" id="GO:0004151">
    <property type="term" value="F:dihydroorotase activity"/>
    <property type="evidence" value="ECO:0007669"/>
    <property type="project" value="UniProtKB-UniRule"/>
</dbReference>
<dbReference type="GO" id="GO:0008270">
    <property type="term" value="F:zinc ion binding"/>
    <property type="evidence" value="ECO:0007669"/>
    <property type="project" value="UniProtKB-UniRule"/>
</dbReference>
<dbReference type="GO" id="GO:0044205">
    <property type="term" value="P:'de novo' UMP biosynthetic process"/>
    <property type="evidence" value="ECO:0007669"/>
    <property type="project" value="UniProtKB-UniRule"/>
</dbReference>
<dbReference type="GO" id="GO:0006145">
    <property type="term" value="P:purine nucleobase catabolic process"/>
    <property type="evidence" value="ECO:0007669"/>
    <property type="project" value="TreeGrafter"/>
</dbReference>
<dbReference type="CDD" id="cd01317">
    <property type="entry name" value="DHOase_IIa"/>
    <property type="match status" value="1"/>
</dbReference>
<dbReference type="FunFam" id="2.30.40.10:FF:000007">
    <property type="entry name" value="Dihydroorotase"/>
    <property type="match status" value="1"/>
</dbReference>
<dbReference type="FunFam" id="3.20.20.140:FF:000025">
    <property type="entry name" value="Dihydroorotase"/>
    <property type="match status" value="1"/>
</dbReference>
<dbReference type="Gene3D" id="3.20.20.140">
    <property type="entry name" value="Metal-dependent hydrolases"/>
    <property type="match status" value="1"/>
</dbReference>
<dbReference type="Gene3D" id="2.30.40.10">
    <property type="entry name" value="Urease, subunit C, domain 1"/>
    <property type="match status" value="2"/>
</dbReference>
<dbReference type="HAMAP" id="MF_00220_B">
    <property type="entry name" value="PyrC_classI_B"/>
    <property type="match status" value="1"/>
</dbReference>
<dbReference type="InterPro" id="IPR006680">
    <property type="entry name" value="Amidohydro-rel"/>
</dbReference>
<dbReference type="InterPro" id="IPR004722">
    <property type="entry name" value="DHOase"/>
</dbReference>
<dbReference type="InterPro" id="IPR050138">
    <property type="entry name" value="DHOase/Allantoinase_Hydrolase"/>
</dbReference>
<dbReference type="InterPro" id="IPR002195">
    <property type="entry name" value="Dihydroorotase_CS"/>
</dbReference>
<dbReference type="InterPro" id="IPR011059">
    <property type="entry name" value="Metal-dep_hydrolase_composite"/>
</dbReference>
<dbReference type="InterPro" id="IPR032466">
    <property type="entry name" value="Metal_Hydrolase"/>
</dbReference>
<dbReference type="NCBIfam" id="NF006837">
    <property type="entry name" value="PRK09357.1-2"/>
    <property type="match status" value="1"/>
</dbReference>
<dbReference type="NCBIfam" id="TIGR00857">
    <property type="entry name" value="pyrC_multi"/>
    <property type="match status" value="1"/>
</dbReference>
<dbReference type="PANTHER" id="PTHR43668">
    <property type="entry name" value="ALLANTOINASE"/>
    <property type="match status" value="1"/>
</dbReference>
<dbReference type="PANTHER" id="PTHR43668:SF2">
    <property type="entry name" value="ALLANTOINASE"/>
    <property type="match status" value="1"/>
</dbReference>
<dbReference type="Pfam" id="PF01979">
    <property type="entry name" value="Amidohydro_1"/>
    <property type="match status" value="1"/>
</dbReference>
<dbReference type="SUPFAM" id="SSF51338">
    <property type="entry name" value="Composite domain of metallo-dependent hydrolases"/>
    <property type="match status" value="1"/>
</dbReference>
<dbReference type="SUPFAM" id="SSF51556">
    <property type="entry name" value="Metallo-dependent hydrolases"/>
    <property type="match status" value="1"/>
</dbReference>
<dbReference type="PROSITE" id="PS00482">
    <property type="entry name" value="DIHYDROOROTASE_1"/>
    <property type="match status" value="1"/>
</dbReference>
<dbReference type="PROSITE" id="PS00483">
    <property type="entry name" value="DIHYDROOROTASE_2"/>
    <property type="match status" value="1"/>
</dbReference>